<comment type="function">
    <text evidence="5 6 7">During embryonic development, regulates the integrity of the genome and therefore the cell cycle progression by preventing rereplication through an APC-Cdh1-dependent mechanism.</text>
</comment>
<comment type="pathway">
    <text>Protein modification; protein ubiquitination.</text>
</comment>
<comment type="subunit">
    <text evidence="1">Part of a SCF (SKP1-cullin-F-box) protein ligase complex.</text>
</comment>
<comment type="subcellular location">
    <subcellularLocation>
        <location evidence="1">Nucleus</location>
    </subcellularLocation>
    <subcellularLocation>
        <location evidence="1">Cytoplasm</location>
    </subcellularLocation>
</comment>
<dbReference type="EMBL" id="AY648791">
    <property type="protein sequence ID" value="AAT68109.1"/>
    <property type="molecule type" value="mRNA"/>
</dbReference>
<dbReference type="EMBL" id="BC115114">
    <property type="protein sequence ID" value="AAI15115.1"/>
    <property type="molecule type" value="mRNA"/>
</dbReference>
<dbReference type="EMBL" id="BC121728">
    <property type="protein sequence ID" value="AAI21729.1"/>
    <property type="molecule type" value="mRNA"/>
</dbReference>
<dbReference type="EMBL" id="BC129281">
    <property type="protein sequence ID" value="AAI29282.1"/>
    <property type="molecule type" value="mRNA"/>
</dbReference>
<dbReference type="RefSeq" id="NP_001003869.1">
    <property type="nucleotide sequence ID" value="NM_001003869.1"/>
</dbReference>
<dbReference type="SMR" id="Q0V967"/>
<dbReference type="FunCoup" id="Q0V967">
    <property type="interactions" value="1780"/>
</dbReference>
<dbReference type="STRING" id="7955.ENSDARP00000056961"/>
<dbReference type="PaxDb" id="7955-ENSDARP00000056961"/>
<dbReference type="GeneID" id="445392"/>
<dbReference type="KEGG" id="dre:445392"/>
<dbReference type="AGR" id="ZFIN:ZDB-GENE-030131-4027"/>
<dbReference type="CTD" id="26271"/>
<dbReference type="ZFIN" id="ZDB-GENE-030131-4027">
    <property type="gene designation" value="fbxo5"/>
</dbReference>
<dbReference type="eggNOG" id="ENOG502QPWN">
    <property type="taxonomic scope" value="Eukaryota"/>
</dbReference>
<dbReference type="InParanoid" id="Q0V967"/>
<dbReference type="OrthoDB" id="9984940at2759"/>
<dbReference type="PhylomeDB" id="Q0V967"/>
<dbReference type="Reactome" id="R-DRE-174113">
    <property type="pathway name" value="SCF-beta-TrCP mediated degradation of Emi1"/>
</dbReference>
<dbReference type="Reactome" id="R-DRE-176408">
    <property type="pathway name" value="Regulation of APC/C activators between G1/S and early anaphase"/>
</dbReference>
<dbReference type="Reactome" id="R-DRE-176417">
    <property type="pathway name" value="Phosphorylation of Emi1"/>
</dbReference>
<dbReference type="Reactome" id="R-DRE-68881">
    <property type="pathway name" value="Mitotic Metaphase/Anaphase Transition"/>
</dbReference>
<dbReference type="UniPathway" id="UPA00143"/>
<dbReference type="PRO" id="PR:Q0V967"/>
<dbReference type="Proteomes" id="UP000000437">
    <property type="component" value="Chromosome 13"/>
</dbReference>
<dbReference type="GO" id="GO:0005737">
    <property type="term" value="C:cytoplasm"/>
    <property type="evidence" value="ECO:0000250"/>
    <property type="project" value="UniProtKB"/>
</dbReference>
<dbReference type="GO" id="GO:0005634">
    <property type="term" value="C:nucleus"/>
    <property type="evidence" value="ECO:0000250"/>
    <property type="project" value="UniProtKB"/>
</dbReference>
<dbReference type="GO" id="GO:0005819">
    <property type="term" value="C:spindle"/>
    <property type="evidence" value="ECO:0000250"/>
    <property type="project" value="UniProtKB"/>
</dbReference>
<dbReference type="GO" id="GO:1990948">
    <property type="term" value="F:ubiquitin ligase inhibitor activity"/>
    <property type="evidence" value="ECO:0000250"/>
    <property type="project" value="UniProtKB"/>
</dbReference>
<dbReference type="GO" id="GO:0008270">
    <property type="term" value="F:zinc ion binding"/>
    <property type="evidence" value="ECO:0007669"/>
    <property type="project" value="UniProtKB-KW"/>
</dbReference>
<dbReference type="GO" id="GO:0051301">
    <property type="term" value="P:cell division"/>
    <property type="evidence" value="ECO:0000315"/>
    <property type="project" value="ZFIN"/>
</dbReference>
<dbReference type="GO" id="GO:0051276">
    <property type="term" value="P:chromosome organization"/>
    <property type="evidence" value="ECO:0000315"/>
    <property type="project" value="ZFIN"/>
</dbReference>
<dbReference type="GO" id="GO:0030097">
    <property type="term" value="P:hemopoiesis"/>
    <property type="evidence" value="ECO:0000315"/>
    <property type="project" value="ZFIN"/>
</dbReference>
<dbReference type="GO" id="GO:0000278">
    <property type="term" value="P:mitotic cell cycle"/>
    <property type="evidence" value="ECO:0000315"/>
    <property type="project" value="ZFIN"/>
</dbReference>
<dbReference type="GO" id="GO:0000281">
    <property type="term" value="P:mitotic cytokinesis"/>
    <property type="evidence" value="ECO:0000315"/>
    <property type="project" value="ZFIN"/>
</dbReference>
<dbReference type="GO" id="GO:0045835">
    <property type="term" value="P:negative regulation of meiotic nuclear division"/>
    <property type="evidence" value="ECO:0000318"/>
    <property type="project" value="GO_Central"/>
</dbReference>
<dbReference type="GO" id="GO:0045839">
    <property type="term" value="P:negative regulation of mitotic nuclear division"/>
    <property type="evidence" value="ECO:0000315"/>
    <property type="project" value="ZFIN"/>
</dbReference>
<dbReference type="GO" id="GO:1904667">
    <property type="term" value="P:negative regulation of ubiquitin protein ligase activity"/>
    <property type="evidence" value="ECO:0000250"/>
    <property type="project" value="UniProtKB"/>
</dbReference>
<dbReference type="GO" id="GO:0016567">
    <property type="term" value="P:protein ubiquitination"/>
    <property type="evidence" value="ECO:0007669"/>
    <property type="project" value="UniProtKB-UniPathway"/>
</dbReference>
<dbReference type="GO" id="GO:0051726">
    <property type="term" value="P:regulation of cell cycle"/>
    <property type="evidence" value="ECO:0000315"/>
    <property type="project" value="ZFIN"/>
</dbReference>
<dbReference type="GO" id="GO:0007346">
    <property type="term" value="P:regulation of mitotic cell cycle"/>
    <property type="evidence" value="ECO:0000250"/>
    <property type="project" value="UniProtKB"/>
</dbReference>
<dbReference type="GO" id="GO:0007088">
    <property type="term" value="P:regulation of mitotic nuclear division"/>
    <property type="evidence" value="ECO:0000318"/>
    <property type="project" value="GO_Central"/>
</dbReference>
<dbReference type="CDD" id="cd20348">
    <property type="entry name" value="BRcat_RBR_EMI"/>
    <property type="match status" value="1"/>
</dbReference>
<dbReference type="CDD" id="cd22170">
    <property type="entry name" value="F-box_FBXO5"/>
    <property type="match status" value="1"/>
</dbReference>
<dbReference type="FunFam" id="2.20.25.20:FF:000006">
    <property type="entry name" value="F-box only protein 5"/>
    <property type="match status" value="1"/>
</dbReference>
<dbReference type="Gene3D" id="1.20.1280.50">
    <property type="match status" value="1"/>
</dbReference>
<dbReference type="Gene3D" id="2.20.25.20">
    <property type="match status" value="1"/>
</dbReference>
<dbReference type="InterPro" id="IPR036047">
    <property type="entry name" value="F-box-like_dom_sf"/>
</dbReference>
<dbReference type="InterPro" id="IPR001810">
    <property type="entry name" value="F-box_dom"/>
</dbReference>
<dbReference type="InterPro" id="IPR047147">
    <property type="entry name" value="FBX5_43"/>
</dbReference>
<dbReference type="InterPro" id="IPR002867">
    <property type="entry name" value="IBR_dom"/>
</dbReference>
<dbReference type="InterPro" id="IPR044064">
    <property type="entry name" value="ZF_ZBR"/>
</dbReference>
<dbReference type="PANTHER" id="PTHR15493:SF8">
    <property type="entry name" value="F-BOX ONLY PROTEIN 5"/>
    <property type="match status" value="1"/>
</dbReference>
<dbReference type="PANTHER" id="PTHR15493">
    <property type="entry name" value="F-BOX ONLY PROTEIN 5 AND 43"/>
    <property type="match status" value="1"/>
</dbReference>
<dbReference type="Pfam" id="PF12937">
    <property type="entry name" value="F-box-like"/>
    <property type="match status" value="1"/>
</dbReference>
<dbReference type="SMART" id="SM00647">
    <property type="entry name" value="IBR"/>
    <property type="match status" value="1"/>
</dbReference>
<dbReference type="SUPFAM" id="SSF81383">
    <property type="entry name" value="F-box domain"/>
    <property type="match status" value="1"/>
</dbReference>
<dbReference type="SUPFAM" id="SSF57850">
    <property type="entry name" value="RING/U-box"/>
    <property type="match status" value="1"/>
</dbReference>
<dbReference type="PROSITE" id="PS51872">
    <property type="entry name" value="ZF_ZBR"/>
    <property type="match status" value="1"/>
</dbReference>
<organism>
    <name type="scientific">Danio rerio</name>
    <name type="common">Zebrafish</name>
    <name type="synonym">Brachydanio rerio</name>
    <dbReference type="NCBI Taxonomy" id="7955"/>
    <lineage>
        <taxon>Eukaryota</taxon>
        <taxon>Metazoa</taxon>
        <taxon>Chordata</taxon>
        <taxon>Craniata</taxon>
        <taxon>Vertebrata</taxon>
        <taxon>Euteleostomi</taxon>
        <taxon>Actinopterygii</taxon>
        <taxon>Neopterygii</taxon>
        <taxon>Teleostei</taxon>
        <taxon>Ostariophysi</taxon>
        <taxon>Cypriniformes</taxon>
        <taxon>Danionidae</taxon>
        <taxon>Danioninae</taxon>
        <taxon>Danio</taxon>
    </lineage>
</organism>
<sequence length="384" mass="43044">MKCPNYTEDSTVLCHMEKTETDLGEVKGHKVSPRKTGALSLRSPAATNVSTPLESRSKGPHNKENYQNKRHSLDMASDDEVIFSGSGLTEDSGYLSLHNSQVDVDGLDSLERSEENCVSSQSLDVECHSGPCLPVLNFQEEACRELQRSYKKNRSYDWTVVDKVAENFGLHNVIGGKMGRQFVDILCKLMRKDMRHILARILGLLGDCDLISCTKVSRTWRKIICQDQLALQRWKKAEKTRRDSGRSMGSLSRDFTLDRVVFSCMQTVSSPPAHKAVKKPPCHMGGAQNATKSSRFQQYVEAAQSLKQHESLRRCSRCSSPARFDAVMQRAVCTRISCAFEFCTLCQSAFHDSTPCRNTVRSFSSTQKTLVAGSARSKRSIRRL</sequence>
<keyword id="KW-0131">Cell cycle</keyword>
<keyword id="KW-0132">Cell division</keyword>
<keyword id="KW-0963">Cytoplasm</keyword>
<keyword id="KW-0479">Metal-binding</keyword>
<keyword id="KW-0498">Mitosis</keyword>
<keyword id="KW-0539">Nucleus</keyword>
<keyword id="KW-1185">Reference proteome</keyword>
<keyword id="KW-0833">Ubl conjugation pathway</keyword>
<keyword id="KW-0862">Zinc</keyword>
<keyword id="KW-0863">Zinc-finger</keyword>
<feature type="chain" id="PRO_0000258009" description="F-box only protein 5">
    <location>
        <begin position="1"/>
        <end position="384"/>
    </location>
</feature>
<feature type="domain" description="F-box" evidence="2">
    <location>
        <begin position="187"/>
        <end position="234"/>
    </location>
</feature>
<feature type="zinc finger region" description="ZBR-type" evidence="3">
    <location>
        <begin position="311"/>
        <end position="359"/>
    </location>
</feature>
<feature type="region of interest" description="Disordered" evidence="4">
    <location>
        <begin position="25"/>
        <end position="67"/>
    </location>
</feature>
<feature type="compositionally biased region" description="Polar residues" evidence="4">
    <location>
        <begin position="45"/>
        <end position="54"/>
    </location>
</feature>
<feature type="compositionally biased region" description="Basic and acidic residues" evidence="4">
    <location>
        <begin position="55"/>
        <end position="67"/>
    </location>
</feature>
<feature type="binding site" evidence="3">
    <location>
        <position position="315"/>
    </location>
    <ligand>
        <name>Zn(2+)</name>
        <dbReference type="ChEBI" id="CHEBI:29105"/>
        <label>1</label>
    </ligand>
</feature>
<feature type="binding site" evidence="3">
    <location>
        <position position="318"/>
    </location>
    <ligand>
        <name>Zn(2+)</name>
        <dbReference type="ChEBI" id="CHEBI:29105"/>
        <label>1</label>
    </ligand>
</feature>
<feature type="binding site" evidence="3">
    <location>
        <position position="333"/>
    </location>
    <ligand>
        <name>Zn(2+)</name>
        <dbReference type="ChEBI" id="CHEBI:29105"/>
        <label>1</label>
    </ligand>
</feature>
<feature type="binding site" evidence="3">
    <location>
        <position position="338"/>
    </location>
    <ligand>
        <name>Zn(2+)</name>
        <dbReference type="ChEBI" id="CHEBI:29105"/>
        <label>1</label>
    </ligand>
</feature>
<feature type="binding site" evidence="3">
    <location>
        <position position="343"/>
    </location>
    <ligand>
        <name>Zn(2+)</name>
        <dbReference type="ChEBI" id="CHEBI:29105"/>
        <label>2</label>
    </ligand>
</feature>
<feature type="binding site" evidence="3">
    <location>
        <position position="346"/>
    </location>
    <ligand>
        <name>Zn(2+)</name>
        <dbReference type="ChEBI" id="CHEBI:29105"/>
        <label>2</label>
    </ligand>
</feature>
<feature type="binding site" evidence="3">
    <location>
        <position position="351"/>
    </location>
    <ligand>
        <name>Zn(2+)</name>
        <dbReference type="ChEBI" id="CHEBI:29105"/>
        <label>2</label>
    </ligand>
</feature>
<feature type="binding site" evidence="3">
    <location>
        <position position="356"/>
    </location>
    <ligand>
        <name>Zn(2+)</name>
        <dbReference type="ChEBI" id="CHEBI:29105"/>
        <label>2</label>
    </ligand>
</feature>
<feature type="mutagenesis site" description="In hrpti245; abnormal bumpy head accompanied by a shortened body axis of the embryo. During embryonic development, mutants are slightly smaller and show little or no growth thereafter. Induces rereplication and mitosis cessation." evidence="6">
    <location>
        <begin position="155"/>
        <end position="384"/>
    </location>
</feature>
<feature type="mutagenesis site" description="In hrpx1; recessive allele that is lethal and induces a reduction of neurons number but with an increase of size. Induces rereplication and mitosis cessation." evidence="6">
    <original>T</original>
    <variation>A</variation>
    <location>
        <position position="159"/>
    </location>
</feature>
<feature type="mutagenesis site" description="In hrpx1; recesive allele that is lethal and induces a reduction of neurons number but with an increase of size. Induces rereplication and mitosis cessation." evidence="6">
    <original>D</original>
    <variation>N</variation>
    <location>
        <position position="162"/>
    </location>
</feature>
<feature type="sequence conflict" description="In Ref. 2; AAI21729." evidence="10" ref="2">
    <original>H</original>
    <variation>R</variation>
    <location>
        <position position="29"/>
    </location>
</feature>
<feature type="sequence conflict" description="In Ref. 1; AAT68109." evidence="10" ref="1">
    <original>S</original>
    <variation>P</variation>
    <location>
        <position position="40"/>
    </location>
</feature>
<feature type="sequence conflict" description="In Ref. 1; AAT68109." evidence="10" ref="1">
    <original>G</original>
    <variation>A</variation>
    <location>
        <position position="206"/>
    </location>
</feature>
<feature type="sequence conflict" description="In Ref. 2; AAI15115." evidence="10" ref="2">
    <original>S</original>
    <variation>P</variation>
    <location>
        <position position="250"/>
    </location>
</feature>
<feature type="sequence conflict" description="In Ref. 1; AAT68109." evidence="10" ref="1">
    <original>T</original>
    <variation>N</variation>
    <location>
        <position position="354"/>
    </location>
</feature>
<feature type="sequence conflict" description="In Ref. 1; AAT68109." evidence="10" ref="1">
    <original>V</original>
    <variation>I</variation>
    <location>
        <position position="360"/>
    </location>
</feature>
<name>FBX5_DANRE</name>
<protein>
    <recommendedName>
        <fullName evidence="10">F-box only protein 5</fullName>
    </recommendedName>
    <alternativeName>
        <fullName evidence="8">Early mitotic inhibitor 1</fullName>
    </alternativeName>
    <alternativeName>
        <fullName evidence="9">Harpy protein</fullName>
    </alternativeName>
</protein>
<gene>
    <name evidence="13" type="primary">fbxo5</name>
    <name evidence="9" type="synonym">hrp</name>
    <name type="ORF">zgc:136397</name>
    <name type="ORF">zgc:158541</name>
</gene>
<accession>Q0V967</accession>
<accession>A1L1Z7</accession>
<accession>Q1RM68</accession>
<accession>Q6DRG8</accession>
<proteinExistence type="evidence at protein level"/>
<reference evidence="12" key="1">
    <citation type="journal article" date="2004" name="Proc. Natl. Acad. Sci. U.S.A.">
        <title>Identification of 315 genes essential for early zebrafish development.</title>
        <authorList>
            <person name="Amsterdam A."/>
            <person name="Nissen R.M."/>
            <person name="Sun Z."/>
            <person name="Swindell E.C."/>
            <person name="Farrington S."/>
            <person name="Hopkins N."/>
        </authorList>
    </citation>
    <scope>NUCLEOTIDE SEQUENCE [LARGE SCALE MRNA]</scope>
</reference>
<reference evidence="11" key="2">
    <citation type="submission" date="2006-12" db="EMBL/GenBank/DDBJ databases">
        <authorList>
            <consortium name="NIH - Zebrafish Gene Collection (ZGC) project"/>
        </authorList>
    </citation>
    <scope>NUCLEOTIDE SEQUENCE [LARGE SCALE MRNA]</scope>
    <source>
        <tissue evidence="11">Ovary</tissue>
    </source>
</reference>
<reference key="3">
    <citation type="journal article" date="2009" name="Mol. Cell. Biol.">
        <title>Emi1 maintains genomic integrity during zebrafish embryogenesis and cooperates with p53 in tumor suppression.</title>
        <authorList>
            <person name="Rhodes J."/>
            <person name="Amsterdam A."/>
            <person name="Sanda T."/>
            <person name="Moreau L.A."/>
            <person name="McKenna K."/>
            <person name="Heinrichs S."/>
            <person name="Ganem N.J."/>
            <person name="Ho K.W."/>
            <person name="Neuberg D.S."/>
            <person name="Johnston A."/>
            <person name="Ahn Y."/>
            <person name="Kutok J.L."/>
            <person name="Hromas R."/>
            <person name="Wray J."/>
            <person name="Lee C."/>
            <person name="Murphy C."/>
            <person name="Radtke I."/>
            <person name="Downing J.R."/>
            <person name="Fleming M.D."/>
            <person name="MacConaill L.E."/>
            <person name="Amatruda J.F."/>
            <person name="Gutierrez A."/>
            <person name="Galinsky I."/>
            <person name="Stone R.M."/>
            <person name="Ross E.A."/>
            <person name="Pellman D.S."/>
            <person name="Kanki J.P."/>
            <person name="Look A.T."/>
        </authorList>
    </citation>
    <scope>FUNCTION</scope>
</reference>
<reference key="4">
    <citation type="journal article" date="2010" name="Dev. Dyn.">
        <title>Characterization of harpy/Rca1/emi1 mutants: patterning in the absence of cell division.</title>
        <authorList>
            <person name="Riley B.B."/>
            <person name="Sweet E.M."/>
            <person name="Heck R."/>
            <person name="Evans A."/>
            <person name="McFarland K.N."/>
            <person name="Warga R.M."/>
            <person name="Kane D.A."/>
        </authorList>
    </citation>
    <scope>MUTAGENESIS OF 155-SER--LEU-384; THR-159 AND ASP-162</scope>
    <scope>FUNCTION</scope>
</reference>
<reference key="5">
    <citation type="journal article" date="2012" name="PLoS ONE">
        <title>Rereplication in emi1-deficient zebrafish embryos occurs through a Cdh1-mediated pathway.</title>
        <authorList>
            <person name="Robu M.E."/>
            <person name="Zhang Y."/>
            <person name="Rhodes J."/>
        </authorList>
    </citation>
    <scope>FUNCTION</scope>
</reference>
<evidence type="ECO:0000250" key="1">
    <source>
        <dbReference type="UniProtKB" id="Q9UKT4"/>
    </source>
</evidence>
<evidence type="ECO:0000255" key="2"/>
<evidence type="ECO:0000255" key="3">
    <source>
        <dbReference type="PROSITE-ProRule" id="PRU01220"/>
    </source>
</evidence>
<evidence type="ECO:0000256" key="4">
    <source>
        <dbReference type="SAM" id="MobiDB-lite"/>
    </source>
</evidence>
<evidence type="ECO:0000269" key="5">
    <source>
    </source>
</evidence>
<evidence type="ECO:0000269" key="6">
    <source>
    </source>
</evidence>
<evidence type="ECO:0000269" key="7">
    <source>
    </source>
</evidence>
<evidence type="ECO:0000303" key="8">
    <source>
    </source>
</evidence>
<evidence type="ECO:0000303" key="9">
    <source>
    </source>
</evidence>
<evidence type="ECO:0000305" key="10"/>
<evidence type="ECO:0000312" key="11">
    <source>
        <dbReference type="EMBL" id="AAI21729.1"/>
    </source>
</evidence>
<evidence type="ECO:0000312" key="12">
    <source>
        <dbReference type="EMBL" id="AAT68109.1"/>
    </source>
</evidence>
<evidence type="ECO:0000312" key="13">
    <source>
        <dbReference type="ZFIN" id="ZDB-GENE-030131-4027"/>
    </source>
</evidence>